<sequence length="300" mass="32623">MGGQLSIEARLKSIIPQLTFDSHKGACGKVAIIGGSVEYTGAPYFSGISALRVGCDLAHIFCHQDAAIAIKSYSPELIVHPFFKEDYDTNEVLKWLDTVQALVVGPGLGRDESVMEATLSILKQAITKNIIIILDADGLFLINNHLDLIRGKKNIILTPNVMEYRRLCDVLKVSHNTPCNKVALMLGGVTILQKGQVDEVSNGSYTVHVKHVGSPRRCGGQGDVLSGSLATFVAWSKLNQDFQDEDLICCSVAASALVKECSSFAFTEKHRGVIASDIIESIPSVFDQVFGQNKIQLIYE</sequence>
<reference key="1">
    <citation type="journal article" date="2005" name="Nature">
        <title>The genome of the protist parasite Entamoeba histolytica.</title>
        <authorList>
            <person name="Loftus B.J."/>
            <person name="Anderson I."/>
            <person name="Davies R."/>
            <person name="Alsmark U.C."/>
            <person name="Samuelson J."/>
            <person name="Amedeo P."/>
            <person name="Roncaglia P."/>
            <person name="Berriman M."/>
            <person name="Hirt R.P."/>
            <person name="Mann B.J."/>
            <person name="Nozaki T."/>
            <person name="Suh B."/>
            <person name="Pop M."/>
            <person name="Duchene M."/>
            <person name="Ackers J."/>
            <person name="Tannich E."/>
            <person name="Leippe M."/>
            <person name="Hofer M."/>
            <person name="Bruchhaus I."/>
            <person name="Willhoeft U."/>
            <person name="Bhattacharya A."/>
            <person name="Chillingworth T."/>
            <person name="Churcher C.M."/>
            <person name="Hance Z."/>
            <person name="Harris B."/>
            <person name="Harris D."/>
            <person name="Jagels K."/>
            <person name="Moule S."/>
            <person name="Mungall K.L."/>
            <person name="Ormond D."/>
            <person name="Squares R."/>
            <person name="Whitehead S."/>
            <person name="Quail M.A."/>
            <person name="Rabbinowitsch E."/>
            <person name="Norbertczak H."/>
            <person name="Price C."/>
            <person name="Wang Z."/>
            <person name="Guillen N."/>
            <person name="Gilchrist C."/>
            <person name="Stroup S.E."/>
            <person name="Bhattacharya S."/>
            <person name="Lohia A."/>
            <person name="Foster P.G."/>
            <person name="Sicheritz-Ponten T."/>
            <person name="Weber C."/>
            <person name="Singh U."/>
            <person name="Mukherjee C."/>
            <person name="El-Sayed N.M.A."/>
            <person name="Petri W.A."/>
            <person name="Clark C.G."/>
            <person name="Embley T.M."/>
            <person name="Barrell B.G."/>
            <person name="Fraser C.M."/>
            <person name="Hall N."/>
        </authorList>
    </citation>
    <scope>NUCLEOTIDE SEQUENCE [LARGE SCALE GENOMIC DNA]</scope>
    <source>
        <strain>ATCC 30459 / HM-1:IMSS / ABRM</strain>
    </source>
</reference>
<reference key="2">
    <citation type="journal article" date="2010" name="PLoS Negl. Trop. Dis.">
        <title>New assembly, reannotation and analysis of the Entamoeba histolytica genome reveal new genomic features and protein content information.</title>
        <authorList>
            <person name="Lorenzi H.A."/>
            <person name="Puiu D."/>
            <person name="Miller J.R."/>
            <person name="Brinkac L.M."/>
            <person name="Amedeo P."/>
            <person name="Hall N."/>
            <person name="Caler E.V."/>
        </authorList>
    </citation>
    <scope>GENOME REANNOTATION</scope>
    <source>
        <strain>ATCC 30459 / HM-1:IMSS / ABRM</strain>
    </source>
</reference>
<feature type="chain" id="PRO_0000416172" description="ATP-dependent (S)-NAD(P)H-hydrate dehydratase">
    <location>
        <begin position="1"/>
        <end position="300"/>
    </location>
</feature>
<feature type="domain" description="YjeF C-terminal" evidence="1">
    <location>
        <begin position="7"/>
        <end position="289"/>
    </location>
</feature>
<feature type="binding site" evidence="1">
    <location>
        <position position="107"/>
    </location>
    <ligand>
        <name>(6S)-NADPHX</name>
        <dbReference type="ChEBI" id="CHEBI:64076"/>
    </ligand>
</feature>
<feature type="binding site" evidence="1">
    <location>
        <begin position="160"/>
        <end position="166"/>
    </location>
    <ligand>
        <name>(6S)-NADPHX</name>
        <dbReference type="ChEBI" id="CHEBI:64076"/>
    </ligand>
</feature>
<feature type="binding site" evidence="1">
    <location>
        <begin position="194"/>
        <end position="198"/>
    </location>
    <ligand>
        <name>ATP</name>
        <dbReference type="ChEBI" id="CHEBI:30616"/>
    </ligand>
</feature>
<feature type="binding site" evidence="1">
    <location>
        <begin position="213"/>
        <end position="222"/>
    </location>
    <ligand>
        <name>ATP</name>
        <dbReference type="ChEBI" id="CHEBI:30616"/>
    </ligand>
</feature>
<feature type="binding site" evidence="1">
    <location>
        <position position="223"/>
    </location>
    <ligand>
        <name>(6S)-NADPHX</name>
        <dbReference type="ChEBI" id="CHEBI:64076"/>
    </ligand>
</feature>
<keyword id="KW-0067">ATP-binding</keyword>
<keyword id="KW-0456">Lyase</keyword>
<keyword id="KW-0520">NAD</keyword>
<keyword id="KW-0521">NADP</keyword>
<keyword id="KW-0547">Nucleotide-binding</keyword>
<keyword id="KW-0597">Phosphoprotein</keyword>
<keyword id="KW-1185">Reference proteome</keyword>
<comment type="function">
    <text evidence="1">Catalyzes the dehydration of the S-form of NAD(P)HX at the expense of ATP, which is converted to ADP. Together with NAD(P)HX epimerase, which catalyzes the epimerization of the S- and R-forms, the enzyme allows the repair of both epimers of NAD(P)HX, a damaged form of NAD(P)H that is a result of enzymatic or heat-dependent hydration.</text>
</comment>
<comment type="catalytic activity">
    <reaction evidence="1">
        <text>(6S)-NADHX + ATP = ADP + phosphate + NADH + H(+)</text>
        <dbReference type="Rhea" id="RHEA:19017"/>
        <dbReference type="ChEBI" id="CHEBI:15378"/>
        <dbReference type="ChEBI" id="CHEBI:30616"/>
        <dbReference type="ChEBI" id="CHEBI:43474"/>
        <dbReference type="ChEBI" id="CHEBI:57945"/>
        <dbReference type="ChEBI" id="CHEBI:64074"/>
        <dbReference type="ChEBI" id="CHEBI:456216"/>
        <dbReference type="EC" id="4.2.1.93"/>
    </reaction>
</comment>
<comment type="catalytic activity">
    <reaction>
        <text>(6S)-NADPHX + ATP = ADP + phosphate + NADPH + H(+)</text>
        <dbReference type="Rhea" id="RHEA:32231"/>
        <dbReference type="ChEBI" id="CHEBI:15378"/>
        <dbReference type="ChEBI" id="CHEBI:30616"/>
        <dbReference type="ChEBI" id="CHEBI:43474"/>
        <dbReference type="ChEBI" id="CHEBI:57783"/>
        <dbReference type="ChEBI" id="CHEBI:64076"/>
        <dbReference type="ChEBI" id="CHEBI:456216"/>
        <dbReference type="EC" id="4.2.1.93"/>
    </reaction>
</comment>
<comment type="cofactor">
    <cofactor evidence="1">
        <name>Mg(2+)</name>
        <dbReference type="ChEBI" id="CHEBI:18420"/>
    </cofactor>
</comment>
<comment type="similarity">
    <text evidence="1">Belongs to the NnrD/CARKD family.</text>
</comment>
<gene>
    <name type="ORF">EHI_194450</name>
</gene>
<organism>
    <name type="scientific">Entamoeba histolytica (strain ATCC 30459 / HM-1:IMSS / ABRM)</name>
    <dbReference type="NCBI Taxonomy" id="294381"/>
    <lineage>
        <taxon>Eukaryota</taxon>
        <taxon>Amoebozoa</taxon>
        <taxon>Evosea</taxon>
        <taxon>Archamoebae</taxon>
        <taxon>Mastigamoebida</taxon>
        <taxon>Entamoebidae</taxon>
        <taxon>Entamoeba</taxon>
    </lineage>
</organism>
<protein>
    <recommendedName>
        <fullName evidence="1">ATP-dependent (S)-NAD(P)H-hydrate dehydratase</fullName>
        <ecNumber evidence="1">4.2.1.93</ecNumber>
    </recommendedName>
    <alternativeName>
        <fullName evidence="1">ATP-dependent NAD(P)HX dehydratase</fullName>
    </alternativeName>
</protein>
<dbReference type="EC" id="4.2.1.93" evidence="1"/>
<dbReference type="EMBL" id="DS571191">
    <property type="protein sequence ID" value="EAL49306.1"/>
    <property type="molecule type" value="Genomic_DNA"/>
</dbReference>
<dbReference type="RefSeq" id="XP_654694.1">
    <property type="nucleotide sequence ID" value="XM_649602.1"/>
</dbReference>
<dbReference type="SMR" id="C4LZV8"/>
<dbReference type="FunCoup" id="C4LZV8">
    <property type="interactions" value="3"/>
</dbReference>
<dbReference type="STRING" id="5759.C4LZV8"/>
<dbReference type="EnsemblProtists" id="rna_EHI_194450-1">
    <property type="protein sequence ID" value="rna_EHI_194450-1"/>
    <property type="gene ID" value="EHI_194450"/>
</dbReference>
<dbReference type="GeneID" id="3409029"/>
<dbReference type="KEGG" id="ehi:EHI_194450"/>
<dbReference type="VEuPathDB" id="AmoebaDB:EHI5A_011940"/>
<dbReference type="VEuPathDB" id="AmoebaDB:EHI7A_005200"/>
<dbReference type="VEuPathDB" id="AmoebaDB:EHI8A_003410"/>
<dbReference type="VEuPathDB" id="AmoebaDB:EHI_194450"/>
<dbReference type="VEuPathDB" id="AmoebaDB:KM1_013530"/>
<dbReference type="eggNOG" id="KOG3974">
    <property type="taxonomic scope" value="Eukaryota"/>
</dbReference>
<dbReference type="HOGENOM" id="CLU_030651_3_0_1"/>
<dbReference type="InParanoid" id="C4LZV8"/>
<dbReference type="OMA" id="WRAAYHN"/>
<dbReference type="OrthoDB" id="8110916at2759"/>
<dbReference type="Proteomes" id="UP000001926">
    <property type="component" value="Partially assembled WGS sequence"/>
</dbReference>
<dbReference type="GO" id="GO:0005524">
    <property type="term" value="F:ATP binding"/>
    <property type="evidence" value="ECO:0007669"/>
    <property type="project" value="UniProtKB-KW"/>
</dbReference>
<dbReference type="GO" id="GO:0047453">
    <property type="term" value="F:ATP-dependent NAD(P)H-hydrate dehydratase activity"/>
    <property type="evidence" value="ECO:0000318"/>
    <property type="project" value="GO_Central"/>
</dbReference>
<dbReference type="GO" id="GO:0110051">
    <property type="term" value="P:metabolite repair"/>
    <property type="evidence" value="ECO:0000318"/>
    <property type="project" value="GO_Central"/>
</dbReference>
<dbReference type="GO" id="GO:0046496">
    <property type="term" value="P:nicotinamide nucleotide metabolic process"/>
    <property type="evidence" value="ECO:0007669"/>
    <property type="project" value="UniProtKB-UniRule"/>
</dbReference>
<dbReference type="CDD" id="cd01171">
    <property type="entry name" value="YXKO-related"/>
    <property type="match status" value="1"/>
</dbReference>
<dbReference type="FunFam" id="3.40.1190.20:FF:000023">
    <property type="entry name" value="ATP-dependent (S)-NAD(P)H-hydrate dehydratase"/>
    <property type="match status" value="1"/>
</dbReference>
<dbReference type="Gene3D" id="3.40.1190.20">
    <property type="match status" value="1"/>
</dbReference>
<dbReference type="HAMAP" id="MF_01965">
    <property type="entry name" value="NADHX_dehydratase"/>
    <property type="match status" value="1"/>
</dbReference>
<dbReference type="InterPro" id="IPR017953">
    <property type="entry name" value="Carbohydrate_kinase_pred_CS"/>
</dbReference>
<dbReference type="InterPro" id="IPR000631">
    <property type="entry name" value="CARKD"/>
</dbReference>
<dbReference type="InterPro" id="IPR029056">
    <property type="entry name" value="Ribokinase-like"/>
</dbReference>
<dbReference type="NCBIfam" id="TIGR00196">
    <property type="entry name" value="yjeF_cterm"/>
    <property type="match status" value="1"/>
</dbReference>
<dbReference type="PANTHER" id="PTHR12592:SF0">
    <property type="entry name" value="ATP-DEPENDENT (S)-NAD(P)H-HYDRATE DEHYDRATASE"/>
    <property type="match status" value="1"/>
</dbReference>
<dbReference type="PANTHER" id="PTHR12592">
    <property type="entry name" value="ATP-DEPENDENT (S)-NAD(P)H-HYDRATE DEHYDRATASE FAMILY MEMBER"/>
    <property type="match status" value="1"/>
</dbReference>
<dbReference type="Pfam" id="PF01256">
    <property type="entry name" value="Carb_kinase"/>
    <property type="match status" value="1"/>
</dbReference>
<dbReference type="SUPFAM" id="SSF53613">
    <property type="entry name" value="Ribokinase-like"/>
    <property type="match status" value="1"/>
</dbReference>
<dbReference type="PROSITE" id="PS01050">
    <property type="entry name" value="YJEF_C_2"/>
    <property type="match status" value="1"/>
</dbReference>
<dbReference type="PROSITE" id="PS51383">
    <property type="entry name" value="YJEF_C_3"/>
    <property type="match status" value="1"/>
</dbReference>
<name>NNRD_ENTH1</name>
<accession>C4LZV8</accession>
<evidence type="ECO:0000255" key="1">
    <source>
        <dbReference type="HAMAP-Rule" id="MF_03157"/>
    </source>
</evidence>
<proteinExistence type="inferred from homology"/>